<reference key="1">
    <citation type="submission" date="2007-10" db="EMBL/GenBank/DDBJ databases">
        <title>Complete sequence of Shewanella pealeana ATCC 700345.</title>
        <authorList>
            <consortium name="US DOE Joint Genome Institute"/>
            <person name="Copeland A."/>
            <person name="Lucas S."/>
            <person name="Lapidus A."/>
            <person name="Barry K."/>
            <person name="Glavina del Rio T."/>
            <person name="Dalin E."/>
            <person name="Tice H."/>
            <person name="Pitluck S."/>
            <person name="Chertkov O."/>
            <person name="Brettin T."/>
            <person name="Bruce D."/>
            <person name="Detter J.C."/>
            <person name="Han C."/>
            <person name="Schmutz J."/>
            <person name="Larimer F."/>
            <person name="Land M."/>
            <person name="Hauser L."/>
            <person name="Kyrpides N."/>
            <person name="Kim E."/>
            <person name="Zhao J.-S.Z."/>
            <person name="Manno D."/>
            <person name="Hawari J."/>
            <person name="Richardson P."/>
        </authorList>
    </citation>
    <scope>NUCLEOTIDE SEQUENCE [LARGE SCALE GENOMIC DNA]</scope>
    <source>
        <strain>ATCC 700345 / ANG-SQ1</strain>
    </source>
</reference>
<keyword id="KW-0046">Antibiotic resistance</keyword>
<keyword id="KW-0997">Cell inner membrane</keyword>
<keyword id="KW-1003">Cell membrane</keyword>
<keyword id="KW-0133">Cell shape</keyword>
<keyword id="KW-0961">Cell wall biogenesis/degradation</keyword>
<keyword id="KW-0378">Hydrolase</keyword>
<keyword id="KW-0472">Membrane</keyword>
<keyword id="KW-0573">Peptidoglycan synthesis</keyword>
<keyword id="KW-1185">Reference proteome</keyword>
<keyword id="KW-0812">Transmembrane</keyword>
<keyword id="KW-1133">Transmembrane helix</keyword>
<evidence type="ECO:0000255" key="1">
    <source>
        <dbReference type="HAMAP-Rule" id="MF_01006"/>
    </source>
</evidence>
<accession>A8H157</accession>
<dbReference type="EC" id="3.6.1.27" evidence="1"/>
<dbReference type="EMBL" id="CP000851">
    <property type="protein sequence ID" value="ABV86294.1"/>
    <property type="molecule type" value="Genomic_DNA"/>
</dbReference>
<dbReference type="RefSeq" id="WP_012154227.1">
    <property type="nucleotide sequence ID" value="NC_009901.1"/>
</dbReference>
<dbReference type="SMR" id="A8H157"/>
<dbReference type="STRING" id="398579.Spea_0967"/>
<dbReference type="KEGG" id="spl:Spea_0967"/>
<dbReference type="eggNOG" id="COG1968">
    <property type="taxonomic scope" value="Bacteria"/>
</dbReference>
<dbReference type="HOGENOM" id="CLU_060296_1_0_6"/>
<dbReference type="OrthoDB" id="9808289at2"/>
<dbReference type="Proteomes" id="UP000002608">
    <property type="component" value="Chromosome"/>
</dbReference>
<dbReference type="GO" id="GO:0005886">
    <property type="term" value="C:plasma membrane"/>
    <property type="evidence" value="ECO:0007669"/>
    <property type="project" value="UniProtKB-SubCell"/>
</dbReference>
<dbReference type="GO" id="GO:0050380">
    <property type="term" value="F:undecaprenyl-diphosphatase activity"/>
    <property type="evidence" value="ECO:0007669"/>
    <property type="project" value="UniProtKB-UniRule"/>
</dbReference>
<dbReference type="GO" id="GO:0071555">
    <property type="term" value="P:cell wall organization"/>
    <property type="evidence" value="ECO:0007669"/>
    <property type="project" value="UniProtKB-KW"/>
</dbReference>
<dbReference type="GO" id="GO:0009252">
    <property type="term" value="P:peptidoglycan biosynthetic process"/>
    <property type="evidence" value="ECO:0007669"/>
    <property type="project" value="UniProtKB-KW"/>
</dbReference>
<dbReference type="GO" id="GO:0008360">
    <property type="term" value="P:regulation of cell shape"/>
    <property type="evidence" value="ECO:0007669"/>
    <property type="project" value="UniProtKB-KW"/>
</dbReference>
<dbReference type="GO" id="GO:0046677">
    <property type="term" value="P:response to antibiotic"/>
    <property type="evidence" value="ECO:0007669"/>
    <property type="project" value="UniProtKB-UniRule"/>
</dbReference>
<dbReference type="HAMAP" id="MF_01006">
    <property type="entry name" value="Undec_diphosphatase"/>
    <property type="match status" value="1"/>
</dbReference>
<dbReference type="InterPro" id="IPR003824">
    <property type="entry name" value="UppP"/>
</dbReference>
<dbReference type="NCBIfam" id="NF001393">
    <property type="entry name" value="PRK00281.2-4"/>
    <property type="match status" value="1"/>
</dbReference>
<dbReference type="NCBIfam" id="TIGR00753">
    <property type="entry name" value="undec_PP_bacA"/>
    <property type="match status" value="1"/>
</dbReference>
<dbReference type="PANTHER" id="PTHR30622">
    <property type="entry name" value="UNDECAPRENYL-DIPHOSPHATASE"/>
    <property type="match status" value="1"/>
</dbReference>
<dbReference type="PANTHER" id="PTHR30622:SF4">
    <property type="entry name" value="UNDECAPRENYL-DIPHOSPHATASE"/>
    <property type="match status" value="1"/>
</dbReference>
<dbReference type="Pfam" id="PF02673">
    <property type="entry name" value="BacA"/>
    <property type="match status" value="1"/>
</dbReference>
<gene>
    <name evidence="1" type="primary">uppP</name>
    <name type="ordered locus">Spea_0967</name>
</gene>
<organism>
    <name type="scientific">Shewanella pealeana (strain ATCC 700345 / ANG-SQ1)</name>
    <dbReference type="NCBI Taxonomy" id="398579"/>
    <lineage>
        <taxon>Bacteria</taxon>
        <taxon>Pseudomonadati</taxon>
        <taxon>Pseudomonadota</taxon>
        <taxon>Gammaproteobacteria</taxon>
        <taxon>Alteromonadales</taxon>
        <taxon>Shewanellaceae</taxon>
        <taxon>Shewanella</taxon>
    </lineage>
</organism>
<name>UPPP_SHEPA</name>
<comment type="function">
    <text evidence="1">Catalyzes the dephosphorylation of undecaprenyl diphosphate (UPP). Confers resistance to bacitracin.</text>
</comment>
<comment type="catalytic activity">
    <reaction evidence="1">
        <text>di-trans,octa-cis-undecaprenyl diphosphate + H2O = di-trans,octa-cis-undecaprenyl phosphate + phosphate + H(+)</text>
        <dbReference type="Rhea" id="RHEA:28094"/>
        <dbReference type="ChEBI" id="CHEBI:15377"/>
        <dbReference type="ChEBI" id="CHEBI:15378"/>
        <dbReference type="ChEBI" id="CHEBI:43474"/>
        <dbReference type="ChEBI" id="CHEBI:58405"/>
        <dbReference type="ChEBI" id="CHEBI:60392"/>
        <dbReference type="EC" id="3.6.1.27"/>
    </reaction>
</comment>
<comment type="subcellular location">
    <subcellularLocation>
        <location evidence="1">Cell inner membrane</location>
        <topology evidence="1">Multi-pass membrane protein</topology>
    </subcellularLocation>
</comment>
<comment type="miscellaneous">
    <text>Bacitracin is thought to be involved in the inhibition of peptidoglycan synthesis by sequestering undecaprenyl diphosphate, thereby reducing the pool of lipid carrier available.</text>
</comment>
<comment type="similarity">
    <text evidence="1">Belongs to the UppP family.</text>
</comment>
<protein>
    <recommendedName>
        <fullName evidence="1">Undecaprenyl-diphosphatase</fullName>
        <ecNumber evidence="1">3.6.1.27</ecNumber>
    </recommendedName>
    <alternativeName>
        <fullName evidence="1">Bacitracin resistance protein</fullName>
    </alternativeName>
    <alternativeName>
        <fullName evidence="1">Undecaprenyl pyrophosphate phosphatase</fullName>
    </alternativeName>
</protein>
<feature type="chain" id="PRO_1000083989" description="Undecaprenyl-diphosphatase">
    <location>
        <begin position="1"/>
        <end position="266"/>
    </location>
</feature>
<feature type="transmembrane region" description="Helical" evidence="1">
    <location>
        <begin position="1"/>
        <end position="21"/>
    </location>
</feature>
<feature type="transmembrane region" description="Helical" evidence="1">
    <location>
        <begin position="39"/>
        <end position="59"/>
    </location>
</feature>
<feature type="transmembrane region" description="Helical" evidence="1">
    <location>
        <begin position="87"/>
        <end position="107"/>
    </location>
</feature>
<feature type="transmembrane region" description="Helical" evidence="1">
    <location>
        <begin position="111"/>
        <end position="131"/>
    </location>
</feature>
<feature type="transmembrane region" description="Helical" evidence="1">
    <location>
        <begin position="144"/>
        <end position="164"/>
    </location>
</feature>
<feature type="transmembrane region" description="Helical" evidence="1">
    <location>
        <begin position="183"/>
        <end position="203"/>
    </location>
</feature>
<feature type="transmembrane region" description="Helical" evidence="1">
    <location>
        <begin position="218"/>
        <end position="238"/>
    </location>
</feature>
<feature type="transmembrane region" description="Helical" evidence="1">
    <location>
        <begin position="246"/>
        <end position="266"/>
    </location>
</feature>
<sequence length="266" mass="29138">MDTFQVIILALIQGLTEFLPISSSAHLILPAQLLGWEDQGLSFDVAVNTGSLLAVVMYFRREILSMFTAWTGSVVSRKQTDESKLAWWIILATIPAVIIGFSAKDFIETHFRSIEVIAATTIIFGLLLWWADKMQRQGLNEFQVGWKKALVIGIAQAMALIPGTSRSGATITAALMLGLSREAAARFSFLMSVPVSLGAAILVTKDLLSSGQVIDYQALGLGILVSFIAAYICIHYFLKIISKMGMTPFVIYRLALGAVLCWIIFL</sequence>
<proteinExistence type="inferred from homology"/>